<reference evidence="2" key="1">
    <citation type="submission" date="2004-03" db="UniProtKB">
        <title>A progesterone regulated transiently expressed 32.6 kDa protein 'implantin' at the 'window of implantation' has N-terminal homology to EF-1-beta.</title>
        <authorList>
            <person name="Laloraya M."/>
            <person name="Kumar P.G."/>
            <person name="Koide S.S."/>
        </authorList>
    </citation>
    <scope>PROTEIN SEQUENCE</scope>
    <scope>FUNCTION</scope>
    <scope>SUBCELLULAR LOCATION</scope>
    <scope>TISSUE SPECIFICITY</scope>
    <scope>DEVELOPMENTAL STAGE</scope>
    <scope>INDUCTION</scope>
    <scope>PHOSPHORYLATION</scope>
</reference>
<keyword id="KW-0963">Cytoplasm</keyword>
<keyword id="KW-0903">Direct protein sequencing</keyword>
<keyword id="KW-0238">DNA-binding</keyword>
<keyword id="KW-0539">Nucleus</keyword>
<keyword id="KW-0597">Phosphoprotein</keyword>
<keyword id="KW-1185">Reference proteome</keyword>
<comment type="function">
    <text evidence="1 2">Binds DNA.</text>
</comment>
<comment type="subcellular location">
    <subcellularLocation>
        <location evidence="1">Cytoplasm</location>
    </subcellularLocation>
    <subcellularLocation>
        <location evidence="1">Nucleus</location>
    </subcellularLocation>
</comment>
<comment type="tissue specificity">
    <text evidence="1 2">Uterus and embryo.</text>
</comment>
<comment type="developmental stage">
    <text evidence="1">Expressed during the 'window of implantation' from 88 to 101 hours post-fertilization (hpf).</text>
</comment>
<comment type="induction">
    <text evidence="1 2">By progesterone.</text>
</comment>
<comment type="PTM">
    <text evidence="1 2">Phosphorylated.</text>
</comment>
<comment type="similarity">
    <text evidence="2">Belongs to the EF-1-beta/EF-1-delta family.</text>
</comment>
<organism evidence="2">
    <name type="scientific">Mus musculus</name>
    <name type="common">Mouse</name>
    <dbReference type="NCBI Taxonomy" id="10090"/>
    <lineage>
        <taxon>Eukaryota</taxon>
        <taxon>Metazoa</taxon>
        <taxon>Chordata</taxon>
        <taxon>Craniata</taxon>
        <taxon>Vertebrata</taxon>
        <taxon>Euteleostomi</taxon>
        <taxon>Mammalia</taxon>
        <taxon>Eutheria</taxon>
        <taxon>Euarchontoglires</taxon>
        <taxon>Glires</taxon>
        <taxon>Rodentia</taxon>
        <taxon>Myomorpha</taxon>
        <taxon>Muroidea</taxon>
        <taxon>Muridae</taxon>
        <taxon>Murinae</taxon>
        <taxon>Mus</taxon>
        <taxon>Mus</taxon>
    </lineage>
</organism>
<evidence type="ECO:0000269" key="1">
    <source ref="1"/>
</evidence>
<evidence type="ECO:0000305" key="2"/>
<protein>
    <recommendedName>
        <fullName>Implantin</fullName>
    </recommendedName>
</protein>
<accession>P83891</accession>
<name>IMPL_MOUSE</name>
<dbReference type="InParanoid" id="P83891"/>
<dbReference type="Proteomes" id="UP000000589">
    <property type="component" value="Unplaced"/>
</dbReference>
<dbReference type="GO" id="GO:0005737">
    <property type="term" value="C:cytoplasm"/>
    <property type="evidence" value="ECO:0007669"/>
    <property type="project" value="UniProtKB-SubCell"/>
</dbReference>
<dbReference type="GO" id="GO:0005634">
    <property type="term" value="C:nucleus"/>
    <property type="evidence" value="ECO:0007669"/>
    <property type="project" value="UniProtKB-SubCell"/>
</dbReference>
<dbReference type="GO" id="GO:0003677">
    <property type="term" value="F:DNA binding"/>
    <property type="evidence" value="ECO:0007669"/>
    <property type="project" value="UniProtKB-KW"/>
</dbReference>
<proteinExistence type="evidence at protein level"/>
<feature type="chain" id="PRO_0000155052" description="Implantin">
    <location>
        <begin position="1"/>
        <end position="20" status="greater than"/>
    </location>
</feature>
<feature type="non-terminal residue" evidence="2">
    <location>
        <position position="20"/>
    </location>
</feature>
<sequence>XVGDLKTPAILRVTNAYLFN</sequence>